<reference key="1">
    <citation type="journal article" date="2007" name="J. Bacteriol.">
        <title>Whole-genome analysis of the methyl tert-butyl ether-degrading beta-proteobacterium Methylibium petroleiphilum PM1.</title>
        <authorList>
            <person name="Kane S.R."/>
            <person name="Chakicherla A.Y."/>
            <person name="Chain P.S.G."/>
            <person name="Schmidt R."/>
            <person name="Shin M.W."/>
            <person name="Legler T.C."/>
            <person name="Scow K.M."/>
            <person name="Larimer F.W."/>
            <person name="Lucas S.M."/>
            <person name="Richardson P.M."/>
            <person name="Hristova K.R."/>
        </authorList>
    </citation>
    <scope>NUCLEOTIDE SEQUENCE [LARGE SCALE GENOMIC DNA]</scope>
    <source>
        <strain>ATCC BAA-1232 / LMG 22953 / PM1</strain>
    </source>
</reference>
<name>RS10_METPP</name>
<proteinExistence type="inferred from homology"/>
<protein>
    <recommendedName>
        <fullName evidence="1">Small ribosomal subunit protein uS10</fullName>
    </recommendedName>
    <alternativeName>
        <fullName evidence="2">30S ribosomal protein S10</fullName>
    </alternativeName>
</protein>
<feature type="chain" id="PRO_1000015056" description="Small ribosomal subunit protein uS10">
    <location>
        <begin position="1"/>
        <end position="103"/>
    </location>
</feature>
<evidence type="ECO:0000255" key="1">
    <source>
        <dbReference type="HAMAP-Rule" id="MF_00508"/>
    </source>
</evidence>
<evidence type="ECO:0000305" key="2"/>
<dbReference type="EMBL" id="CP000555">
    <property type="protein sequence ID" value="ABM96397.1"/>
    <property type="molecule type" value="Genomic_DNA"/>
</dbReference>
<dbReference type="RefSeq" id="WP_011831018.1">
    <property type="nucleotide sequence ID" value="NC_008825.1"/>
</dbReference>
<dbReference type="SMR" id="A2SLF8"/>
<dbReference type="STRING" id="420662.Mpe_A3444"/>
<dbReference type="KEGG" id="mpt:Mpe_A3444"/>
<dbReference type="eggNOG" id="COG0051">
    <property type="taxonomic scope" value="Bacteria"/>
</dbReference>
<dbReference type="HOGENOM" id="CLU_122625_1_3_4"/>
<dbReference type="Proteomes" id="UP000000366">
    <property type="component" value="Chromosome"/>
</dbReference>
<dbReference type="GO" id="GO:1990904">
    <property type="term" value="C:ribonucleoprotein complex"/>
    <property type="evidence" value="ECO:0007669"/>
    <property type="project" value="UniProtKB-KW"/>
</dbReference>
<dbReference type="GO" id="GO:0005840">
    <property type="term" value="C:ribosome"/>
    <property type="evidence" value="ECO:0007669"/>
    <property type="project" value="UniProtKB-KW"/>
</dbReference>
<dbReference type="GO" id="GO:0003735">
    <property type="term" value="F:structural constituent of ribosome"/>
    <property type="evidence" value="ECO:0007669"/>
    <property type="project" value="InterPro"/>
</dbReference>
<dbReference type="GO" id="GO:0000049">
    <property type="term" value="F:tRNA binding"/>
    <property type="evidence" value="ECO:0007669"/>
    <property type="project" value="UniProtKB-UniRule"/>
</dbReference>
<dbReference type="GO" id="GO:0006412">
    <property type="term" value="P:translation"/>
    <property type="evidence" value="ECO:0007669"/>
    <property type="project" value="UniProtKB-UniRule"/>
</dbReference>
<dbReference type="FunFam" id="3.30.70.600:FF:000001">
    <property type="entry name" value="30S ribosomal protein S10"/>
    <property type="match status" value="1"/>
</dbReference>
<dbReference type="Gene3D" id="3.30.70.600">
    <property type="entry name" value="Ribosomal protein S10 domain"/>
    <property type="match status" value="1"/>
</dbReference>
<dbReference type="HAMAP" id="MF_00508">
    <property type="entry name" value="Ribosomal_uS10"/>
    <property type="match status" value="1"/>
</dbReference>
<dbReference type="InterPro" id="IPR001848">
    <property type="entry name" value="Ribosomal_uS10"/>
</dbReference>
<dbReference type="InterPro" id="IPR018268">
    <property type="entry name" value="Ribosomal_uS10_CS"/>
</dbReference>
<dbReference type="InterPro" id="IPR027486">
    <property type="entry name" value="Ribosomal_uS10_dom"/>
</dbReference>
<dbReference type="InterPro" id="IPR036838">
    <property type="entry name" value="Ribosomal_uS10_dom_sf"/>
</dbReference>
<dbReference type="NCBIfam" id="NF001861">
    <property type="entry name" value="PRK00596.1"/>
    <property type="match status" value="1"/>
</dbReference>
<dbReference type="NCBIfam" id="TIGR01049">
    <property type="entry name" value="rpsJ_bact"/>
    <property type="match status" value="1"/>
</dbReference>
<dbReference type="PANTHER" id="PTHR11700">
    <property type="entry name" value="30S RIBOSOMAL PROTEIN S10 FAMILY MEMBER"/>
    <property type="match status" value="1"/>
</dbReference>
<dbReference type="Pfam" id="PF00338">
    <property type="entry name" value="Ribosomal_S10"/>
    <property type="match status" value="1"/>
</dbReference>
<dbReference type="PRINTS" id="PR00971">
    <property type="entry name" value="RIBOSOMALS10"/>
</dbReference>
<dbReference type="SMART" id="SM01403">
    <property type="entry name" value="Ribosomal_S10"/>
    <property type="match status" value="1"/>
</dbReference>
<dbReference type="SUPFAM" id="SSF54999">
    <property type="entry name" value="Ribosomal protein S10"/>
    <property type="match status" value="1"/>
</dbReference>
<dbReference type="PROSITE" id="PS00361">
    <property type="entry name" value="RIBOSOMAL_S10"/>
    <property type="match status" value="1"/>
</dbReference>
<keyword id="KW-1185">Reference proteome</keyword>
<keyword id="KW-0687">Ribonucleoprotein</keyword>
<keyword id="KW-0689">Ribosomal protein</keyword>
<gene>
    <name evidence="1" type="primary">rpsJ</name>
    <name type="ordered locus">Mpe_A3444</name>
</gene>
<comment type="function">
    <text evidence="1">Involved in the binding of tRNA to the ribosomes.</text>
</comment>
<comment type="subunit">
    <text evidence="1">Part of the 30S ribosomal subunit.</text>
</comment>
<comment type="similarity">
    <text evidence="1">Belongs to the universal ribosomal protein uS10 family.</text>
</comment>
<accession>A2SLF8</accession>
<organism>
    <name type="scientific">Methylibium petroleiphilum (strain ATCC BAA-1232 / LMG 22953 / PM1)</name>
    <dbReference type="NCBI Taxonomy" id="420662"/>
    <lineage>
        <taxon>Bacteria</taxon>
        <taxon>Pseudomonadati</taxon>
        <taxon>Pseudomonadota</taxon>
        <taxon>Betaproteobacteria</taxon>
        <taxon>Burkholderiales</taxon>
        <taxon>Sphaerotilaceae</taxon>
        <taxon>Methylibium</taxon>
    </lineage>
</organism>
<sequence>MQKQKIRIRLKAFDYKLIDQSALEIVDTAKRTGAIVKGPVPLPTRMQRFDILRSPHVNKSSRDQFEIRTHQRLMDIVDPTDKTVDALMKLDLPAGVDVEIKLQ</sequence>